<protein>
    <recommendedName>
        <fullName>FeMo cofactor biosynthesis protein NifB</fullName>
        <ecNumber>4.-.-.-</ecNumber>
    </recommendedName>
    <alternativeName>
        <fullName>Nitrogenase cofactor maturase NifB</fullName>
    </alternativeName>
    <alternativeName>
        <fullName>Radical SAM assemblase NifB</fullName>
    </alternativeName>
</protein>
<comment type="function">
    <text evidence="1">Involved in the biosynthesis of the iron-molybdenum cofactor (FeMo-co or M-cluster) found in the dinitrogenase enzyme of the nitrogenase complex in nitrogen-fixing microorganisms. NifB catalyzes the crucial step of radical SAM-dependent carbide insertion that occurs concomitant with the insertion of a 9th sulfur and the rearrangement/coupling of two [4Fe-4S] clusters into a [8Fe-9S-C] cluster, the precursor to the M-cluster.</text>
</comment>
<comment type="cofactor">
    <cofactor evidence="1">
        <name>[4Fe-4S] cluster</name>
        <dbReference type="ChEBI" id="CHEBI:49883"/>
    </cofactor>
    <text evidence="1">Binds 3 [4Fe-4S] clusters per monomer. One cluster is coordinated with 3 cysteines and an exchangeable S-adenosyl-L-methionine. The two others probably act as substrate.</text>
</comment>
<comment type="pathway">
    <text evidence="1">Cofactor biosynthesis; Fe-Mo cofactor biosynthesis.</text>
</comment>
<comment type="similarity">
    <text evidence="4">Belongs to the radical SAM superfamily. NifB family.</text>
</comment>
<feature type="chain" id="PRO_0000153041" description="FeMo cofactor biosynthesis protein NifB">
    <location>
        <begin position="1"/>
        <end position="468"/>
    </location>
</feature>
<feature type="domain" description="Radical SAM core" evidence="3">
    <location>
        <begin position="40"/>
        <end position="289"/>
    </location>
</feature>
<feature type="binding site" evidence="2">
    <location>
        <position position="54"/>
    </location>
    <ligand>
        <name>[4Fe-4S] cluster</name>
        <dbReference type="ChEBI" id="CHEBI:49883"/>
        <label>1</label>
        <note>4Fe-4S-S-AdoMet</note>
    </ligand>
</feature>
<feature type="binding site" evidence="2">
    <location>
        <position position="58"/>
    </location>
    <ligand>
        <name>[4Fe-4S] cluster</name>
        <dbReference type="ChEBI" id="CHEBI:49883"/>
        <label>1</label>
        <note>4Fe-4S-S-AdoMet</note>
    </ligand>
</feature>
<feature type="binding site" evidence="2">
    <location>
        <position position="60"/>
    </location>
    <ligand>
        <name>S-adenosyl-L-methionine</name>
        <dbReference type="ChEBI" id="CHEBI:59789"/>
    </ligand>
</feature>
<feature type="binding site" evidence="2">
    <location>
        <position position="61"/>
    </location>
    <ligand>
        <name>[4Fe-4S] cluster</name>
        <dbReference type="ChEBI" id="CHEBI:49883"/>
        <label>1</label>
        <note>4Fe-4S-S-AdoMet</note>
    </ligand>
</feature>
<feature type="binding site" evidence="2">
    <location>
        <position position="108"/>
    </location>
    <ligand>
        <name>S-adenosyl-L-methionine</name>
        <dbReference type="ChEBI" id="CHEBI:59789"/>
    </ligand>
</feature>
<feature type="binding site" evidence="2">
    <location>
        <position position="160"/>
    </location>
    <ligand>
        <name>S-adenosyl-L-methionine</name>
        <dbReference type="ChEBI" id="CHEBI:59789"/>
    </ligand>
</feature>
<feature type="binding site" evidence="2">
    <location>
        <position position="212"/>
    </location>
    <ligand>
        <name>S-adenosyl-L-methionine</name>
        <dbReference type="ChEBI" id="CHEBI:59789"/>
    </ligand>
</feature>
<feature type="binding site" evidence="1">
    <location>
        <position position="285"/>
    </location>
    <ligand>
        <name>[4Fe-4S] cluster</name>
        <dbReference type="ChEBI" id="CHEBI:49883"/>
        <label>2</label>
    </ligand>
</feature>
<feature type="binding site" evidence="1">
    <location>
        <position position="288"/>
    </location>
    <ligand>
        <name>[4Fe-4S] cluster</name>
        <dbReference type="ChEBI" id="CHEBI:49883"/>
        <label>2</label>
    </ligand>
</feature>
<feature type="sequence conflict" description="In Ref. 2; AAA25107." evidence="4" ref="2">
    <original>V</original>
    <variation>M</variation>
    <location>
        <position position="141"/>
    </location>
</feature>
<feature type="sequence conflict" description="In Ref. 2; AAA25107." evidence="4" ref="2">
    <original>A</original>
    <variation>G</variation>
    <location>
        <position position="188"/>
    </location>
</feature>
<feature type="sequence conflict" description="In Ref. 2; AAA25107." evidence="4" ref="2">
    <original>G</original>
    <variation>D</variation>
    <location>
        <position position="227"/>
    </location>
</feature>
<feature type="sequence conflict" description="In Ref. 2; AAA25107." evidence="4" ref="2">
    <original>G</original>
    <variation>R</variation>
    <location>
        <position position="256"/>
    </location>
</feature>
<organism>
    <name type="scientific">Klebsiella pneumoniae</name>
    <dbReference type="NCBI Taxonomy" id="573"/>
    <lineage>
        <taxon>Bacteria</taxon>
        <taxon>Pseudomonadati</taxon>
        <taxon>Pseudomonadota</taxon>
        <taxon>Gammaproteobacteria</taxon>
        <taxon>Enterobacterales</taxon>
        <taxon>Enterobacteriaceae</taxon>
        <taxon>Klebsiella/Raoultella group</taxon>
        <taxon>Klebsiella</taxon>
        <taxon>Klebsiella pneumoniae complex</taxon>
    </lineage>
</organism>
<accession>P10390</accession>
<keyword id="KW-0004">4Fe-4S</keyword>
<keyword id="KW-0408">Iron</keyword>
<keyword id="KW-0411">Iron-sulfur</keyword>
<keyword id="KW-0456">Lyase</keyword>
<keyword id="KW-0479">Metal-binding</keyword>
<keyword id="KW-0535">Nitrogen fixation</keyword>
<keyword id="KW-0949">S-adenosyl-L-methionine</keyword>
<proteinExistence type="inferred from homology"/>
<sequence length="468" mass="50856">MTSCSSFSGGKACRPADDSALTPLVADKAAAHPCYSRHGHHRFARMHLPVAPACNLQCNYCNRKFDCSNESRPGVSSTLLTPEQAVVKVRQVAQAIPQLSVVGIAGPGDPLANIARTFRTLELIREQLPDLKLCLSTNGLVLPDAVDRLLDVGVDHVTVTINTLDAEIAAQIYAWLWLDGERYSGREAGEILIARQLEGVRRLTAKGVLVKINSVLIPGINDSGMAGVSRALRASGAFIHNIMPLIARPEHGTVFGLNGQPEPDAETLAATRSRCGEVMPQMTHCHQCRADAIGMLGEDRSQQFTQLPAPESLPAWLPILHQRAQLHASIATRGESEADDACLVAVASSRGDVIDCHFGHADRFYIYSLSAAGMVLVNERFTPKYCQGRDDCEPQDNAARFAAILELLADVKAVFCVRIGHTPWQQLEQEGIEPCVDGAWRPVSEVLPAWWQQRRGSWPAALPHKGVA</sequence>
<evidence type="ECO:0000250" key="1">
    <source>
        <dbReference type="UniProtKB" id="D5VRM1"/>
    </source>
</evidence>
<evidence type="ECO:0000250" key="2">
    <source>
        <dbReference type="UniProtKB" id="P69848"/>
    </source>
</evidence>
<evidence type="ECO:0000255" key="3">
    <source>
        <dbReference type="PROSITE-ProRule" id="PRU01266"/>
    </source>
</evidence>
<evidence type="ECO:0000305" key="4"/>
<gene>
    <name type="primary">nifB</name>
</gene>
<name>NIFB_KLEPN</name>
<dbReference type="EC" id="4.-.-.-"/>
<dbReference type="EMBL" id="X13303">
    <property type="protein sequence ID" value="CAA31683.1"/>
    <property type="molecule type" value="Genomic_DNA"/>
</dbReference>
<dbReference type="EMBL" id="M15545">
    <property type="protein sequence ID" value="AAA25107.1"/>
    <property type="molecule type" value="Genomic_DNA"/>
</dbReference>
<dbReference type="PIR" id="S02514">
    <property type="entry name" value="S02514"/>
</dbReference>
<dbReference type="SMR" id="P10390"/>
<dbReference type="UniPathway" id="UPA00782"/>
<dbReference type="GO" id="GO:0051539">
    <property type="term" value="F:4 iron, 4 sulfur cluster binding"/>
    <property type="evidence" value="ECO:0007669"/>
    <property type="project" value="UniProtKB-KW"/>
</dbReference>
<dbReference type="GO" id="GO:0016829">
    <property type="term" value="F:lyase activity"/>
    <property type="evidence" value="ECO:0007669"/>
    <property type="project" value="UniProtKB-KW"/>
</dbReference>
<dbReference type="GO" id="GO:0046872">
    <property type="term" value="F:metal ion binding"/>
    <property type="evidence" value="ECO:0007669"/>
    <property type="project" value="UniProtKB-KW"/>
</dbReference>
<dbReference type="GO" id="GO:0009399">
    <property type="term" value="P:nitrogen fixation"/>
    <property type="evidence" value="ECO:0007669"/>
    <property type="project" value="UniProtKB-KW"/>
</dbReference>
<dbReference type="CDD" id="cd00852">
    <property type="entry name" value="NifB"/>
    <property type="match status" value="1"/>
</dbReference>
<dbReference type="CDD" id="cd01335">
    <property type="entry name" value="Radical_SAM"/>
    <property type="match status" value="1"/>
</dbReference>
<dbReference type="Gene3D" id="3.20.20.70">
    <property type="entry name" value="Aldolase class I"/>
    <property type="match status" value="1"/>
</dbReference>
<dbReference type="Gene3D" id="3.30.420.130">
    <property type="entry name" value="Dinitrogenase iron-molybdenum cofactor biosynthesis domain"/>
    <property type="match status" value="1"/>
</dbReference>
<dbReference type="InterPro" id="IPR013785">
    <property type="entry name" value="Aldolase_TIM"/>
</dbReference>
<dbReference type="InterPro" id="IPR003731">
    <property type="entry name" value="Di-Nase_FeMo-co_biosynth"/>
</dbReference>
<dbReference type="InterPro" id="IPR036105">
    <property type="entry name" value="DiNase_FeMo-co_biosyn_sf"/>
</dbReference>
<dbReference type="InterPro" id="IPR006638">
    <property type="entry name" value="Elp3/MiaA/NifB-like_rSAM"/>
</dbReference>
<dbReference type="InterPro" id="IPR000385">
    <property type="entry name" value="MoaA_NifB_PqqE_Fe-S-bd_CS"/>
</dbReference>
<dbReference type="InterPro" id="IPR005980">
    <property type="entry name" value="Nase_CF_NifB"/>
</dbReference>
<dbReference type="InterPro" id="IPR034165">
    <property type="entry name" value="NifB_C"/>
</dbReference>
<dbReference type="InterPro" id="IPR007197">
    <property type="entry name" value="rSAM"/>
</dbReference>
<dbReference type="NCBIfam" id="TIGR01290">
    <property type="entry name" value="nifB"/>
    <property type="match status" value="1"/>
</dbReference>
<dbReference type="PANTHER" id="PTHR43787:SF13">
    <property type="entry name" value="FEMO COFACTOR BIOSYNTHESIS PROTEIN NIFB"/>
    <property type="match status" value="1"/>
</dbReference>
<dbReference type="PANTHER" id="PTHR43787">
    <property type="entry name" value="FEMO COFACTOR BIOSYNTHESIS PROTEIN NIFB-RELATED"/>
    <property type="match status" value="1"/>
</dbReference>
<dbReference type="Pfam" id="PF02579">
    <property type="entry name" value="Nitro_FeMo-Co"/>
    <property type="match status" value="1"/>
</dbReference>
<dbReference type="Pfam" id="PF04055">
    <property type="entry name" value="Radical_SAM"/>
    <property type="match status" value="1"/>
</dbReference>
<dbReference type="SFLD" id="SFLDF00281">
    <property type="entry name" value="FeMo_cofactor_biosynthesis_pro"/>
    <property type="match status" value="1"/>
</dbReference>
<dbReference type="SFLD" id="SFLDS00029">
    <property type="entry name" value="Radical_SAM"/>
    <property type="match status" value="1"/>
</dbReference>
<dbReference type="SFLD" id="SFLDG01067">
    <property type="entry name" value="SPASM/twitch_domain_containing"/>
    <property type="match status" value="1"/>
</dbReference>
<dbReference type="SMART" id="SM00729">
    <property type="entry name" value="Elp3"/>
    <property type="match status" value="1"/>
</dbReference>
<dbReference type="SUPFAM" id="SSF53146">
    <property type="entry name" value="Nitrogenase accessory factor-like"/>
    <property type="match status" value="1"/>
</dbReference>
<dbReference type="SUPFAM" id="SSF102114">
    <property type="entry name" value="Radical SAM enzymes"/>
    <property type="match status" value="1"/>
</dbReference>
<dbReference type="PROSITE" id="PS01305">
    <property type="entry name" value="MOAA_NIFB_PQQE"/>
    <property type="match status" value="1"/>
</dbReference>
<dbReference type="PROSITE" id="PS51918">
    <property type="entry name" value="RADICAL_SAM"/>
    <property type="match status" value="1"/>
</dbReference>
<reference key="1">
    <citation type="journal article" date="1988" name="J. Mol. Biol.">
        <title>Nucleotide sequence of a 24,206-base-pair DNA fragment carrying the entire nitrogen fixation gene cluster of Klebsiella pneumoniae.</title>
        <authorList>
            <person name="Arnold W."/>
            <person name="Rump A."/>
            <person name="Klipp W."/>
            <person name="Priefer U.B."/>
            <person name="Puehler A."/>
        </authorList>
    </citation>
    <scope>NUCLEOTIDE SEQUENCE [GENOMIC DNA]</scope>
</reference>
<reference key="2">
    <citation type="journal article" date="1987" name="J. Bacteriol.">
        <title>Conservation of structure and location of Rhizobium meliloti and Klebsiella pneumoniae nifB genes.</title>
        <authorList>
            <person name="Buikema W.J."/>
            <person name="Klingensmith J.A."/>
            <person name="Gibbons S.L."/>
            <person name="Ausubel F.M."/>
        </authorList>
    </citation>
    <scope>NUCLEOTIDE SEQUENCE [GENOMIC DNA]</scope>
</reference>